<evidence type="ECO:0000255" key="1">
    <source>
        <dbReference type="HAMAP-Rule" id="MF_01392"/>
    </source>
</evidence>
<sequence>MEKIFKILANLKFAIALLLLISITITFGSIIEQDQTLDYYKQNYPLTNPIGGFLTWKVINMFQLNHIYKNFWFISLLLSLGISLIACTFFQQFPGIKFSRRCYFSNNPRKTDFQTQLKTNLSRNIIYTIISEGYFVFQQKKNFYGTKGIIGRIAPVFVHLSIILILLGSIFASLGGFNSQELIGKGEIFHIQNVTSSGPLTKLSQQAIRVNDFWINYYPNNKIKQFYSNLSIINGDGQEVRSKTISVNKPLIYKDLTFYQTDWNLLGLRISHNNKNFQIPVIQTTQNLNKVWLTWLPLESNTSKNLSGETIIINNYKGTIYIYDNNGQLNKKIELSNFIENKNYKLIEFLSVTGIQIKSDPGILFIYFGFGFLMVSTILSYLSFSQVWLGIDYLEQNNIKLTVNAKTNRTKVLALTVRIQPFL</sequence>
<reference key="1">
    <citation type="journal article" date="2008" name="BMC Genomics">
        <title>Chloroplast genome sequencing analysis of Heterosigma akashiwo CCMP452 (West Atlantic) and NIES293 (West Pacific) strains.</title>
        <authorList>
            <person name="Cattolico R.A."/>
            <person name="Jacobs M.A."/>
            <person name="Zhou Y."/>
            <person name="Chang J."/>
            <person name="Duplessis M."/>
            <person name="Lybrand T."/>
            <person name="McKay J."/>
            <person name="Ong H.C."/>
            <person name="Sims E."/>
            <person name="Rocap G."/>
        </authorList>
    </citation>
    <scope>NUCLEOTIDE SEQUENCE [LARGE SCALE GENOMIC DNA]</scope>
</reference>
<organism>
    <name type="scientific">Heterosigma akashiwo (strain NIES-293 / 8280G21-1)</name>
    <dbReference type="NCBI Taxonomy" id="536047"/>
    <lineage>
        <taxon>Eukaryota</taxon>
        <taxon>Sar</taxon>
        <taxon>Stramenopiles</taxon>
        <taxon>Ochrophyta</taxon>
        <taxon>Raphidophyceae</taxon>
        <taxon>Chattonellales</taxon>
        <taxon>Chattonellaceae</taxon>
        <taxon>Heterosigma</taxon>
    </lineage>
</organism>
<dbReference type="EMBL" id="EU168190">
    <property type="protein sequence ID" value="ABV66024.1"/>
    <property type="molecule type" value="Genomic_DNA"/>
</dbReference>
<dbReference type="RefSeq" id="YP_001936418.1">
    <property type="nucleotide sequence ID" value="NC_010772.1"/>
</dbReference>
<dbReference type="SMR" id="B2XTC6"/>
<dbReference type="GeneID" id="6335599"/>
<dbReference type="GO" id="GO:0009535">
    <property type="term" value="C:chloroplast thylakoid membrane"/>
    <property type="evidence" value="ECO:0007669"/>
    <property type="project" value="UniProtKB-SubCell"/>
</dbReference>
<dbReference type="GO" id="GO:0017004">
    <property type="term" value="P:cytochrome complex assembly"/>
    <property type="evidence" value="ECO:0007669"/>
    <property type="project" value="UniProtKB-UniRule"/>
</dbReference>
<dbReference type="HAMAP" id="MF_01392">
    <property type="entry name" value="CytC_Ccs1"/>
    <property type="match status" value="1"/>
</dbReference>
<dbReference type="InterPro" id="IPR023494">
    <property type="entry name" value="Cyt_c_bgen_Ccs1/CcsB/ResB"/>
</dbReference>
<dbReference type="InterPro" id="IPR007816">
    <property type="entry name" value="ResB-like_domain"/>
</dbReference>
<dbReference type="PANTHER" id="PTHR31566">
    <property type="entry name" value="CYTOCHROME C BIOGENESIS PROTEIN CCS1, CHLOROPLASTIC"/>
    <property type="match status" value="1"/>
</dbReference>
<dbReference type="PANTHER" id="PTHR31566:SF0">
    <property type="entry name" value="CYTOCHROME C BIOGENESIS PROTEIN CCS1, CHLOROPLASTIC"/>
    <property type="match status" value="1"/>
</dbReference>
<dbReference type="Pfam" id="PF05140">
    <property type="entry name" value="ResB"/>
    <property type="match status" value="1"/>
</dbReference>
<gene>
    <name evidence="1" type="primary">ccs1</name>
    <name type="ordered locus">Heak293_Cp117</name>
</gene>
<proteinExistence type="inferred from homology"/>
<geneLocation type="chloroplast"/>
<keyword id="KW-0150">Chloroplast</keyword>
<keyword id="KW-0201">Cytochrome c-type biogenesis</keyword>
<keyword id="KW-0472">Membrane</keyword>
<keyword id="KW-0934">Plastid</keyword>
<keyword id="KW-0793">Thylakoid</keyword>
<keyword id="KW-0812">Transmembrane</keyword>
<keyword id="KW-1133">Transmembrane helix</keyword>
<comment type="function">
    <text evidence="1">Required during biogenesis of c-type cytochromes (cytochrome c6 and cytochrome f) at the step of heme attachment.</text>
</comment>
<comment type="subunit">
    <text evidence="1">May interact with CcsA.</text>
</comment>
<comment type="subcellular location">
    <subcellularLocation>
        <location evidence="1">Plastid</location>
        <location evidence="1">Chloroplast thylakoid membrane</location>
        <topology evidence="1">Multi-pass membrane protein</topology>
    </subcellularLocation>
</comment>
<comment type="similarity">
    <text evidence="1">Belongs to the Ccs1/CcsB family.</text>
</comment>
<accession>B2XTC6</accession>
<feature type="chain" id="PRO_0000363645" description="Cytochrome c biogenesis protein Ccs1">
    <location>
        <begin position="1"/>
        <end position="423"/>
    </location>
</feature>
<feature type="transmembrane region" description="Helical" evidence="1">
    <location>
        <begin position="11"/>
        <end position="31"/>
    </location>
</feature>
<feature type="transmembrane region" description="Helical" evidence="1">
    <location>
        <begin position="70"/>
        <end position="90"/>
    </location>
</feature>
<feature type="transmembrane region" description="Helical" evidence="1">
    <location>
        <begin position="153"/>
        <end position="173"/>
    </location>
</feature>
<name>CCS1_HETA2</name>
<protein>
    <recommendedName>
        <fullName evidence="1">Cytochrome c biogenesis protein Ccs1</fullName>
    </recommendedName>
</protein>